<comment type="function">
    <text evidence="1">Catalyzes the phosphorylation of the hydroxyl group of 4-methyl-5-beta-hydroxyethylthiazole (THZ).</text>
</comment>
<comment type="catalytic activity">
    <reaction evidence="1">
        <text>5-(2-hydroxyethyl)-4-methylthiazole + ATP = 4-methyl-5-(2-phosphooxyethyl)-thiazole + ADP + H(+)</text>
        <dbReference type="Rhea" id="RHEA:24212"/>
        <dbReference type="ChEBI" id="CHEBI:15378"/>
        <dbReference type="ChEBI" id="CHEBI:17957"/>
        <dbReference type="ChEBI" id="CHEBI:30616"/>
        <dbReference type="ChEBI" id="CHEBI:58296"/>
        <dbReference type="ChEBI" id="CHEBI:456216"/>
        <dbReference type="EC" id="2.7.1.50"/>
    </reaction>
</comment>
<comment type="cofactor">
    <cofactor evidence="1">
        <name>Mg(2+)</name>
        <dbReference type="ChEBI" id="CHEBI:18420"/>
    </cofactor>
</comment>
<comment type="pathway">
    <text evidence="1">Cofactor biosynthesis; thiamine diphosphate biosynthesis; 4-methyl-5-(2-phosphoethyl)-thiazole from 5-(2-hydroxyethyl)-4-methylthiazole: step 1/1.</text>
</comment>
<comment type="similarity">
    <text evidence="1">Belongs to the Thz kinase family.</text>
</comment>
<keyword id="KW-0067">ATP-binding</keyword>
<keyword id="KW-0418">Kinase</keyword>
<keyword id="KW-0460">Magnesium</keyword>
<keyword id="KW-0479">Metal-binding</keyword>
<keyword id="KW-0547">Nucleotide-binding</keyword>
<keyword id="KW-0784">Thiamine biosynthesis</keyword>
<keyword id="KW-0808">Transferase</keyword>
<proteinExistence type="inferred from homology"/>
<gene>
    <name evidence="1" type="primary">thiM</name>
    <name type="ordered locus">CPR_1337</name>
</gene>
<reference key="1">
    <citation type="journal article" date="2006" name="Genome Res.">
        <title>Skewed genomic variability in strains of the toxigenic bacterial pathogen, Clostridium perfringens.</title>
        <authorList>
            <person name="Myers G.S.A."/>
            <person name="Rasko D.A."/>
            <person name="Cheung J.K."/>
            <person name="Ravel J."/>
            <person name="Seshadri R."/>
            <person name="DeBoy R.T."/>
            <person name="Ren Q."/>
            <person name="Varga J."/>
            <person name="Awad M.M."/>
            <person name="Brinkac L.M."/>
            <person name="Daugherty S.C."/>
            <person name="Haft D.H."/>
            <person name="Dodson R.J."/>
            <person name="Madupu R."/>
            <person name="Nelson W.C."/>
            <person name="Rosovitz M.J."/>
            <person name="Sullivan S.A."/>
            <person name="Khouri H."/>
            <person name="Dimitrov G.I."/>
            <person name="Watkins K.L."/>
            <person name="Mulligan S."/>
            <person name="Benton J."/>
            <person name="Radune D."/>
            <person name="Fisher D.J."/>
            <person name="Atkins H.S."/>
            <person name="Hiscox T."/>
            <person name="Jost B.H."/>
            <person name="Billington S.J."/>
            <person name="Songer J.G."/>
            <person name="McClane B.A."/>
            <person name="Titball R.W."/>
            <person name="Rood J.I."/>
            <person name="Melville S.B."/>
            <person name="Paulsen I.T."/>
        </authorList>
    </citation>
    <scope>NUCLEOTIDE SEQUENCE [LARGE SCALE GENOMIC DNA]</scope>
    <source>
        <strain>SM101 / Type A</strain>
    </source>
</reference>
<evidence type="ECO:0000255" key="1">
    <source>
        <dbReference type="HAMAP-Rule" id="MF_00228"/>
    </source>
</evidence>
<protein>
    <recommendedName>
        <fullName evidence="1">Hydroxyethylthiazole kinase</fullName>
        <ecNumber evidence="1">2.7.1.50</ecNumber>
    </recommendedName>
    <alternativeName>
        <fullName evidence="1">4-methyl-5-beta-hydroxyethylthiazole kinase</fullName>
        <shortName evidence="1">TH kinase</shortName>
        <shortName evidence="1">Thz kinase</shortName>
    </alternativeName>
</protein>
<dbReference type="EC" id="2.7.1.50" evidence="1"/>
<dbReference type="EMBL" id="CP000312">
    <property type="protein sequence ID" value="ABG86073.1"/>
    <property type="molecule type" value="Genomic_DNA"/>
</dbReference>
<dbReference type="RefSeq" id="WP_011592314.1">
    <property type="nucleotide sequence ID" value="NC_008262.1"/>
</dbReference>
<dbReference type="SMR" id="Q0STA0"/>
<dbReference type="KEGG" id="cpr:CPR_1337"/>
<dbReference type="UniPathway" id="UPA00060">
    <property type="reaction ID" value="UER00139"/>
</dbReference>
<dbReference type="Proteomes" id="UP000001824">
    <property type="component" value="Chromosome"/>
</dbReference>
<dbReference type="GO" id="GO:0005524">
    <property type="term" value="F:ATP binding"/>
    <property type="evidence" value="ECO:0007669"/>
    <property type="project" value="UniProtKB-UniRule"/>
</dbReference>
<dbReference type="GO" id="GO:0004417">
    <property type="term" value="F:hydroxyethylthiazole kinase activity"/>
    <property type="evidence" value="ECO:0007669"/>
    <property type="project" value="UniProtKB-UniRule"/>
</dbReference>
<dbReference type="GO" id="GO:0000287">
    <property type="term" value="F:magnesium ion binding"/>
    <property type="evidence" value="ECO:0007669"/>
    <property type="project" value="UniProtKB-UniRule"/>
</dbReference>
<dbReference type="GO" id="GO:0009228">
    <property type="term" value="P:thiamine biosynthetic process"/>
    <property type="evidence" value="ECO:0007669"/>
    <property type="project" value="UniProtKB-KW"/>
</dbReference>
<dbReference type="GO" id="GO:0009229">
    <property type="term" value="P:thiamine diphosphate biosynthetic process"/>
    <property type="evidence" value="ECO:0007669"/>
    <property type="project" value="UniProtKB-UniRule"/>
</dbReference>
<dbReference type="CDD" id="cd01170">
    <property type="entry name" value="THZ_kinase"/>
    <property type="match status" value="1"/>
</dbReference>
<dbReference type="Gene3D" id="3.40.1190.20">
    <property type="match status" value="1"/>
</dbReference>
<dbReference type="HAMAP" id="MF_00228">
    <property type="entry name" value="Thz_kinase"/>
    <property type="match status" value="1"/>
</dbReference>
<dbReference type="InterPro" id="IPR000417">
    <property type="entry name" value="Hyethyz_kinase"/>
</dbReference>
<dbReference type="InterPro" id="IPR029056">
    <property type="entry name" value="Ribokinase-like"/>
</dbReference>
<dbReference type="NCBIfam" id="NF006830">
    <property type="entry name" value="PRK09355.1"/>
    <property type="match status" value="1"/>
</dbReference>
<dbReference type="Pfam" id="PF02110">
    <property type="entry name" value="HK"/>
    <property type="match status" value="1"/>
</dbReference>
<dbReference type="PIRSF" id="PIRSF000513">
    <property type="entry name" value="Thz_kinase"/>
    <property type="match status" value="1"/>
</dbReference>
<dbReference type="PRINTS" id="PR01099">
    <property type="entry name" value="HYETHTZKNASE"/>
</dbReference>
<dbReference type="SUPFAM" id="SSF53613">
    <property type="entry name" value="Ribokinase-like"/>
    <property type="match status" value="1"/>
</dbReference>
<organism>
    <name type="scientific">Clostridium perfringens (strain SM101 / Type A)</name>
    <dbReference type="NCBI Taxonomy" id="289380"/>
    <lineage>
        <taxon>Bacteria</taxon>
        <taxon>Bacillati</taxon>
        <taxon>Bacillota</taxon>
        <taxon>Clostridia</taxon>
        <taxon>Eubacteriales</taxon>
        <taxon>Clostridiaceae</taxon>
        <taxon>Clostridium</taxon>
    </lineage>
</organism>
<accession>Q0STA0</accession>
<sequence>MEVLKRENPLIHMITNYVTVNDLAQVTINYGGLPLMATHHDELKVITKMANGLLVNIGTLEPYQMESSMISMKIAKEKGIPSVLDSVCVQVSKLRRDFAKKIILEGEPSLIKGNLAEIKTLIGETSNSIGIDSFEDSLSENTKNKIKEYAKERNLIVVVSGVVDFITNGEESASVKNGTYKMSKITGTGCMLGALLTLALSFYDHKDLRFKEVVKAVSTWGICGELAEERLREKEGLMTFKYNLLDELSIINDEIIKEREKVIYE</sequence>
<name>THIM_CLOPS</name>
<feature type="chain" id="PRO_1000021506" description="Hydroxyethylthiazole kinase">
    <location>
        <begin position="1"/>
        <end position="265"/>
    </location>
</feature>
<feature type="binding site" evidence="1">
    <location>
        <position position="36"/>
    </location>
    <ligand>
        <name>substrate</name>
    </ligand>
</feature>
<feature type="binding site" evidence="1">
    <location>
        <position position="112"/>
    </location>
    <ligand>
        <name>ATP</name>
        <dbReference type="ChEBI" id="CHEBI:30616"/>
    </ligand>
</feature>
<feature type="binding site" evidence="1">
    <location>
        <position position="160"/>
    </location>
    <ligand>
        <name>ATP</name>
        <dbReference type="ChEBI" id="CHEBI:30616"/>
    </ligand>
</feature>
<feature type="binding site" evidence="1">
    <location>
        <position position="187"/>
    </location>
    <ligand>
        <name>substrate</name>
    </ligand>
</feature>